<sequence>MTNNGNEPNLTLSDLYDKDVVYTSRPSYISNPWLKPDEHQSNFLTGRELLIANQLPVIVHEASATDKLHQLFQVIGKEVPNSIYTFNNQQSYENLIKQLAHKENKKIYFQYIHDETILNQQYYALDKTLFVALNNKARIPEWTNGKFLPKRKVVKIEQFENEIKNWEFPLVIKPGDDLPTAGGYGVMICYHDADLQKAITRIKEATAETNSLIIEQKIEEKANYCVQFAYSESLGIQYLGAATQLTDKYGFYNGNENTTNVPEHVIEAGRQIMENGVNQGFFGVAGFDLLVDEDDNVYAIDLNFRQNGSTSMLLLANELNSGYQKFYSYHSKGDNTHFFNTILKYVKEGSLYPLSYYDGDWYGEDKVKSRFGCIWHGDSKETVLENERAFLAELEHY</sequence>
<organism evidence="7 8">
    <name type="scientific">Staphylococcus aureus (strain NCTC 8325 / PS 47)</name>
    <dbReference type="NCBI Taxonomy" id="93061"/>
    <lineage>
        <taxon>Bacteria</taxon>
        <taxon>Bacillati</taxon>
        <taxon>Bacillota</taxon>
        <taxon>Bacilli</taxon>
        <taxon>Bacillales</taxon>
        <taxon>Staphylococcaceae</taxon>
        <taxon>Staphylococcus</taxon>
    </lineage>
</organism>
<feature type="chain" id="PRO_0000458768" description="L-aspartate--L-methionine ligase">
    <location>
        <begin position="1"/>
        <end position="397"/>
    </location>
</feature>
<feature type="domain" description="ATP-grasp" evidence="1">
    <location>
        <begin position="131"/>
        <end position="347"/>
    </location>
</feature>
<feature type="active site" description="Critical for catalysis" evidence="3">
    <location>
        <position position="305"/>
    </location>
</feature>
<feature type="binding site" evidence="3 9 10">
    <location>
        <position position="136"/>
    </location>
    <ligand>
        <name>ADP</name>
        <dbReference type="ChEBI" id="CHEBI:456216"/>
    </ligand>
</feature>
<feature type="binding site" evidence="3 9 10">
    <location>
        <position position="171"/>
    </location>
    <ligand>
        <name>ADP</name>
        <dbReference type="ChEBI" id="CHEBI:456216"/>
    </ligand>
</feature>
<feature type="binding site" evidence="3 9 10">
    <location>
        <position position="173"/>
    </location>
    <ligand>
        <name>ADP</name>
        <dbReference type="ChEBI" id="CHEBI:456216"/>
    </ligand>
</feature>
<feature type="binding site" evidence="3 10">
    <location>
        <position position="183"/>
    </location>
    <ligand>
        <name>ADP</name>
        <dbReference type="ChEBI" id="CHEBI:456216"/>
    </ligand>
</feature>
<feature type="binding site" evidence="3 9 10">
    <location>
        <position position="186"/>
    </location>
    <ligand>
        <name>ADP</name>
        <dbReference type="ChEBI" id="CHEBI:456216"/>
    </ligand>
</feature>
<feature type="binding site" evidence="3 9 10">
    <location>
        <position position="188"/>
    </location>
    <ligand>
        <name>ADP</name>
        <dbReference type="ChEBI" id="CHEBI:456216"/>
    </ligand>
</feature>
<feature type="binding site" evidence="3 9 10">
    <location>
        <position position="215"/>
    </location>
    <ligand>
        <name>ADP</name>
        <dbReference type="ChEBI" id="CHEBI:456216"/>
    </ligand>
</feature>
<feature type="binding site" evidence="3 9 10">
    <location>
        <position position="216"/>
    </location>
    <ligand>
        <name>ADP</name>
        <dbReference type="ChEBI" id="CHEBI:456216"/>
    </ligand>
</feature>
<feature type="binding site" evidence="3 9 10">
    <location>
        <position position="218"/>
    </location>
    <ligand>
        <name>ADP</name>
        <dbReference type="ChEBI" id="CHEBI:456216"/>
    </ligand>
</feature>
<feature type="binding site" evidence="3 10">
    <location>
        <position position="223"/>
    </location>
    <ligand>
        <name>ADP</name>
        <dbReference type="ChEBI" id="CHEBI:456216"/>
    </ligand>
</feature>
<feature type="binding site" evidence="3 9 10">
    <location>
        <position position="246"/>
    </location>
    <ligand>
        <name>ADP</name>
        <dbReference type="ChEBI" id="CHEBI:456216"/>
    </ligand>
</feature>
<feature type="binding site" evidence="3 9 10">
    <location>
        <position position="288"/>
    </location>
    <ligand>
        <name>Mg(2+)</name>
        <dbReference type="ChEBI" id="CHEBI:18420"/>
    </ligand>
</feature>
<feature type="binding site" evidence="3 9 10">
    <location>
        <position position="290"/>
    </location>
    <ligand>
        <name>ADP</name>
        <dbReference type="ChEBI" id="CHEBI:456216"/>
    </ligand>
</feature>
<feature type="binding site" evidence="3 9 10">
    <location>
        <position position="300"/>
    </location>
    <ligand>
        <name>ADP</name>
        <dbReference type="ChEBI" id="CHEBI:456216"/>
    </ligand>
</feature>
<feature type="binding site" evidence="3 9 10">
    <location>
        <position position="301"/>
    </location>
    <ligand>
        <name>Mg(2+)</name>
        <dbReference type="ChEBI" id="CHEBI:18420"/>
    </ligand>
</feature>
<feature type="mutagenesis site" description="19% relative activity." evidence="3">
    <original>L</original>
    <variation>A</variation>
    <location>
        <position position="44"/>
    </location>
</feature>
<feature type="mutagenesis site" description="Loss of activity." evidence="3">
    <original>L</original>
    <variation>E</variation>
    <variation>D</variation>
    <location>
        <position position="44"/>
    </location>
</feature>
<feature type="mutagenesis site" description="14% relative activity." evidence="3">
    <original>L</original>
    <variation>F</variation>
    <location>
        <position position="44"/>
    </location>
</feature>
<feature type="mutagenesis site" description="13% relative activity." evidence="3">
    <original>L</original>
    <variation>H</variation>
    <location>
        <position position="44"/>
    </location>
</feature>
<feature type="mutagenesis site" description="7% relative activity." evidence="3">
    <original>L</original>
    <variation>K</variation>
    <location>
        <position position="44"/>
    </location>
</feature>
<feature type="mutagenesis site" description="8% relative activity." evidence="3">
    <original>L</original>
    <variation>Y</variation>
    <location>
        <position position="44"/>
    </location>
</feature>
<feature type="mutagenesis site" description="Loss of activity." evidence="3">
    <original>R</original>
    <variation>A</variation>
    <variation>H</variation>
    <location>
        <position position="47"/>
    </location>
</feature>
<feature type="mutagenesis site" description="9% relative activity." evidence="3">
    <original>R</original>
    <variation>K</variation>
    <location>
        <position position="47"/>
    </location>
</feature>
<feature type="mutagenesis site" description="No effect on activity." evidence="3">
    <original>Y</original>
    <variation>F</variation>
    <location>
        <position position="111"/>
    </location>
</feature>
<feature type="mutagenesis site" description="2% relative activity." evidence="3">
    <original>Y</original>
    <variation>F</variation>
    <location>
        <position position="252"/>
    </location>
</feature>
<feature type="mutagenesis site" description="Loss of activity." evidence="3">
    <original>N</original>
    <variation>A</variation>
    <location>
        <position position="255"/>
    </location>
</feature>
<feature type="mutagenesis site" description="Loss of activity." evidence="3">
    <original>R</original>
    <variation>A</variation>
    <location>
        <position position="305"/>
    </location>
</feature>
<feature type="mutagenesis site" description="10% relative activity." evidence="3">
    <original>N</original>
    <variation>A</variation>
    <location>
        <position position="307"/>
    </location>
</feature>
<feature type="mutagenesis site" description="Loss of activity." evidence="3">
    <original>S</original>
    <variation>A</variation>
    <location>
        <position position="309"/>
    </location>
</feature>
<feature type="helix" evidence="11">
    <location>
        <begin position="12"/>
        <end position="14"/>
    </location>
</feature>
<feature type="strand" evidence="11">
    <location>
        <begin position="20"/>
        <end position="23"/>
    </location>
</feature>
<feature type="helix" evidence="11">
    <location>
        <begin position="38"/>
        <end position="44"/>
    </location>
</feature>
<feature type="turn" evidence="11">
    <location>
        <begin position="45"/>
        <end position="48"/>
    </location>
</feature>
<feature type="helix" evidence="11">
    <location>
        <begin position="49"/>
        <end position="52"/>
    </location>
</feature>
<feature type="strand" evidence="11">
    <location>
        <begin position="57"/>
        <end position="60"/>
    </location>
</feature>
<feature type="helix" evidence="11">
    <location>
        <begin position="61"/>
        <end position="64"/>
    </location>
</feature>
<feature type="helix" evidence="11">
    <location>
        <begin position="66"/>
        <end position="74"/>
    </location>
</feature>
<feature type="strand" evidence="11">
    <location>
        <begin position="83"/>
        <end position="86"/>
    </location>
</feature>
<feature type="helix" evidence="11">
    <location>
        <begin position="89"/>
        <end position="102"/>
    </location>
</feature>
<feature type="strand" evidence="11">
    <location>
        <begin position="106"/>
        <end position="111"/>
    </location>
</feature>
<feature type="turn" evidence="11">
    <location>
        <begin position="115"/>
        <end position="117"/>
    </location>
</feature>
<feature type="helix" evidence="11">
    <location>
        <begin position="120"/>
        <end position="122"/>
    </location>
</feature>
<feature type="strand" evidence="11">
    <location>
        <begin position="123"/>
        <end position="125"/>
    </location>
</feature>
<feature type="helix" evidence="11">
    <location>
        <begin position="127"/>
        <end position="133"/>
    </location>
</feature>
<feature type="helix" evidence="11">
    <location>
        <begin position="136"/>
        <end position="138"/>
    </location>
</feature>
<feature type="helix" evidence="11">
    <location>
        <begin position="139"/>
        <end position="143"/>
    </location>
</feature>
<feature type="strand" evidence="11">
    <location>
        <begin position="150"/>
        <end position="155"/>
    </location>
</feature>
<feature type="helix" evidence="11">
    <location>
        <begin position="156"/>
        <end position="163"/>
    </location>
</feature>
<feature type="strand" evidence="11">
    <location>
        <begin position="168"/>
        <end position="174"/>
    </location>
</feature>
<feature type="turn" evidence="12">
    <location>
        <begin position="182"/>
        <end position="185"/>
    </location>
</feature>
<feature type="strand" evidence="11">
    <location>
        <begin position="187"/>
        <end position="191"/>
    </location>
</feature>
<feature type="helix" evidence="11">
    <location>
        <begin position="192"/>
        <end position="202"/>
    </location>
</feature>
<feature type="helix" evidence="12">
    <location>
        <begin position="205"/>
        <end position="208"/>
    </location>
</feature>
<feature type="strand" evidence="11">
    <location>
        <begin position="211"/>
        <end position="216"/>
    </location>
</feature>
<feature type="strand" evidence="11">
    <location>
        <begin position="221"/>
        <end position="231"/>
    </location>
</feature>
<feature type="turn" evidence="11">
    <location>
        <begin position="232"/>
        <end position="234"/>
    </location>
</feature>
<feature type="strand" evidence="11">
    <location>
        <begin position="235"/>
        <end position="246"/>
    </location>
</feature>
<feature type="strand" evidence="11">
    <location>
        <begin position="252"/>
        <end position="259"/>
    </location>
</feature>
<feature type="helix" evidence="11">
    <location>
        <begin position="263"/>
        <end position="278"/>
    </location>
</feature>
<feature type="strand" evidence="11">
    <location>
        <begin position="283"/>
        <end position="291"/>
    </location>
</feature>
<feature type="strand" evidence="11">
    <location>
        <begin position="297"/>
        <end position="305"/>
    </location>
</feature>
<feature type="helix" evidence="11">
    <location>
        <begin position="308"/>
        <end position="314"/>
    </location>
</feature>
<feature type="helix" evidence="11">
    <location>
        <begin position="316"/>
        <end position="318"/>
    </location>
</feature>
<feature type="strand" evidence="11">
    <location>
        <begin position="321"/>
        <end position="330"/>
    </location>
</feature>
<feature type="helix" evidence="11">
    <location>
        <begin position="335"/>
        <end position="348"/>
    </location>
</feature>
<feature type="strand" evidence="11">
    <location>
        <begin position="350"/>
        <end position="357"/>
    </location>
</feature>
<feature type="helix" evidence="11">
    <location>
        <begin position="359"/>
        <end position="362"/>
    </location>
</feature>
<feature type="turn" evidence="11">
    <location>
        <begin position="364"/>
        <end position="366"/>
    </location>
</feature>
<feature type="strand" evidence="11">
    <location>
        <begin position="370"/>
        <end position="378"/>
    </location>
</feature>
<feature type="helix" evidence="11">
    <location>
        <begin position="380"/>
        <end position="394"/>
    </location>
</feature>
<accession>Q2FWC5</accession>
<protein>
    <recommendedName>
        <fullName evidence="5">L-aspartate--L-methionine ligase</fullName>
        <shortName evidence="5">LdmS</shortName>
        <ecNumber evidence="3">6.3.2.-</ecNumber>
    </recommendedName>
    <alternativeName>
        <fullName evidence="6">ATP-dependent dipeptide ligase</fullName>
    </alternativeName>
    <alternativeName>
        <fullName evidence="5">ATP-grasp enzyme</fullName>
    </alternativeName>
    <alternativeName>
        <fullName evidence="5">L-Asp-L-Met ligase</fullName>
    </alternativeName>
    <alternativeName>
        <fullName evidence="5">L-amino acid ligase</fullName>
        <shortName evidence="5">LAL</shortName>
    </alternativeName>
</protein>
<evidence type="ECO:0000255" key="1">
    <source>
        <dbReference type="PROSITE-ProRule" id="PRU00409"/>
    </source>
</evidence>
<evidence type="ECO:0000269" key="2">
    <source>
    </source>
</evidence>
<evidence type="ECO:0000269" key="3">
    <source>
    </source>
</evidence>
<evidence type="ECO:0000303" key="4">
    <source>
    </source>
</evidence>
<evidence type="ECO:0000303" key="5">
    <source>
    </source>
</evidence>
<evidence type="ECO:0000305" key="6"/>
<evidence type="ECO:0000312" key="7">
    <source>
        <dbReference type="EMBL" id="ABD31404.1"/>
    </source>
</evidence>
<evidence type="ECO:0000312" key="8">
    <source>
        <dbReference type="Proteomes" id="UP000008816"/>
    </source>
</evidence>
<evidence type="ECO:0007744" key="9">
    <source>
        <dbReference type="PDB" id="7R8P"/>
    </source>
</evidence>
<evidence type="ECO:0007744" key="10">
    <source>
        <dbReference type="PDB" id="7R8Q"/>
    </source>
</evidence>
<evidence type="ECO:0007829" key="11">
    <source>
        <dbReference type="PDB" id="7R8P"/>
    </source>
</evidence>
<evidence type="ECO:0007829" key="12">
    <source>
        <dbReference type="PDB" id="7R8Q"/>
    </source>
</evidence>
<dbReference type="EC" id="6.3.2.-" evidence="3"/>
<dbReference type="EMBL" id="CP000253">
    <property type="protein sequence ID" value="ABD31404.1"/>
    <property type="molecule type" value="Genomic_DNA"/>
</dbReference>
<dbReference type="RefSeq" id="YP_500850.1">
    <property type="nucleotide sequence ID" value="NC_007795.1"/>
</dbReference>
<dbReference type="PDB" id="7R8P">
    <property type="method" value="X-ray"/>
    <property type="resolution" value="1.37 A"/>
    <property type="chains" value="A=1-397"/>
</dbReference>
<dbReference type="PDB" id="7R8Q">
    <property type="method" value="X-ray"/>
    <property type="resolution" value="2.00 A"/>
    <property type="chains" value="A/B=1-397"/>
</dbReference>
<dbReference type="PDBsum" id="7R8P"/>
<dbReference type="PDBsum" id="7R8Q"/>
<dbReference type="SMR" id="Q2FWC5"/>
<dbReference type="STRING" id="93061.SAOUHSC_02373"/>
<dbReference type="PaxDb" id="1280-SAXN108_2377"/>
<dbReference type="GeneID" id="3919416"/>
<dbReference type="KEGG" id="sao:SAOUHSC_02373"/>
<dbReference type="PATRIC" id="fig|93061.5.peg.2150"/>
<dbReference type="eggNOG" id="COG1181">
    <property type="taxonomic scope" value="Bacteria"/>
</dbReference>
<dbReference type="HOGENOM" id="CLU_064012_0_0_9"/>
<dbReference type="OrthoDB" id="7839480at2"/>
<dbReference type="Proteomes" id="UP000008816">
    <property type="component" value="Chromosome"/>
</dbReference>
<dbReference type="GO" id="GO:0016881">
    <property type="term" value="F:acid-amino acid ligase activity"/>
    <property type="evidence" value="ECO:0000314"/>
    <property type="project" value="UniProtKB"/>
</dbReference>
<dbReference type="GO" id="GO:0005524">
    <property type="term" value="F:ATP binding"/>
    <property type="evidence" value="ECO:0000314"/>
    <property type="project" value="UniProtKB"/>
</dbReference>
<dbReference type="GO" id="GO:0042802">
    <property type="term" value="F:identical protein binding"/>
    <property type="evidence" value="ECO:0000314"/>
    <property type="project" value="UniProtKB"/>
</dbReference>
<dbReference type="GO" id="GO:0034026">
    <property type="term" value="F:L-amino-acid alpha-ligase activity"/>
    <property type="evidence" value="ECO:0000314"/>
    <property type="project" value="UniProtKB"/>
</dbReference>
<dbReference type="GO" id="GO:0000287">
    <property type="term" value="F:magnesium ion binding"/>
    <property type="evidence" value="ECO:0000314"/>
    <property type="project" value="UniProtKB"/>
</dbReference>
<dbReference type="GO" id="GO:0042803">
    <property type="term" value="F:protein homodimerization activity"/>
    <property type="evidence" value="ECO:0000314"/>
    <property type="project" value="UniProtKB"/>
</dbReference>
<dbReference type="GO" id="GO:1901605">
    <property type="term" value="P:alpha-amino acid metabolic process"/>
    <property type="evidence" value="ECO:0000314"/>
    <property type="project" value="UniProtKB"/>
</dbReference>
<dbReference type="GO" id="GO:0006555">
    <property type="term" value="P:methionine metabolic process"/>
    <property type="evidence" value="ECO:0000314"/>
    <property type="project" value="UniProtKB"/>
</dbReference>
<dbReference type="GO" id="GO:0000096">
    <property type="term" value="P:sulfur amino acid metabolic process"/>
    <property type="evidence" value="ECO:0000314"/>
    <property type="project" value="UniProtKB"/>
</dbReference>
<dbReference type="Gene3D" id="3.30.470.20">
    <property type="entry name" value="ATP-grasp fold, B domain"/>
    <property type="match status" value="1"/>
</dbReference>
<dbReference type="InterPro" id="IPR053269">
    <property type="entry name" value="Asp-Met_ligase"/>
</dbReference>
<dbReference type="InterPro" id="IPR011761">
    <property type="entry name" value="ATP-grasp"/>
</dbReference>
<dbReference type="PANTHER" id="PTHR37018">
    <property type="entry name" value="CULTURE SPECIFIC PROTEIN, PUTATIVE (AFU_ORTHOLOGUE AFUA_2G00130)-RELATED"/>
    <property type="match status" value="1"/>
</dbReference>
<dbReference type="PANTHER" id="PTHR37018:SF1">
    <property type="entry name" value="CULTURE SPECIFIC PROTEIN, PUTATIVE (AFU_ORTHOLOGUE AFUA_2G00130)-RELATED"/>
    <property type="match status" value="1"/>
</dbReference>
<dbReference type="SUPFAM" id="SSF56059">
    <property type="entry name" value="Glutathione synthetase ATP-binding domain-like"/>
    <property type="match status" value="1"/>
</dbReference>
<dbReference type="PROSITE" id="PS50975">
    <property type="entry name" value="ATP_GRASP"/>
    <property type="match status" value="1"/>
</dbReference>
<reference evidence="8" key="1">
    <citation type="book" date="2006" name="Gram positive pathogens, 2nd edition">
        <title>The Staphylococcus aureus NCTC 8325 genome.</title>
        <editorList>
            <person name="Fischetti V."/>
            <person name="Novick R."/>
            <person name="Ferretti J."/>
            <person name="Portnoy D."/>
            <person name="Rood J."/>
        </editorList>
        <authorList>
            <person name="Gillaspy A.F."/>
            <person name="Worrell V."/>
            <person name="Orvis J."/>
            <person name="Roe B.A."/>
            <person name="Dyer D.W."/>
            <person name="Iandolo J.J."/>
        </authorList>
    </citation>
    <scope>NUCLEOTIDE SEQUENCE [LARGE SCALE GENOMIC DNA]</scope>
    <source>
        <strain evidence="8">NCTC 8325 / PS 47</strain>
    </source>
</reference>
<reference key="2">
    <citation type="journal article" date="2015" name="BMC Genomics">
        <title>A new platform for ultra-high density Staphylococcus aureus transposon libraries.</title>
        <authorList>
            <person name="Santiago M."/>
            <person name="Matano L.M."/>
            <person name="Moussa S.H."/>
            <person name="Gilmore M.S."/>
            <person name="Walker S."/>
            <person name="Meredith T.C."/>
        </authorList>
    </citation>
    <scope>DISRUPTION PHENOTYPE</scope>
    <source>
        <strain evidence="4">NCTC 8325 / PS 47</strain>
    </source>
</reference>
<reference evidence="9 10" key="3">
    <citation type="journal article" date="2022" name="J. Biol. Chem.">
        <title>Discovery of an -amino acid ligase implicated in Staphylococcal sulfur amino acid metabolism.</title>
        <authorList>
            <person name="Pederick J.L."/>
            <person name="Horsfall A.J."/>
            <person name="Jovcevski B."/>
            <person name="Klose J."/>
            <person name="Abell A.D."/>
            <person name="Pukala T.L."/>
            <person name="Bruning J.B."/>
        </authorList>
    </citation>
    <scope>X-RAY CRYSTALLOGRAPHY (1.37 ANGSTROMS) IN COMPLEX WITH ADP; CITRATE; MAGNESIUM AND SODIUM</scope>
    <scope>FUNCTION</scope>
    <scope>CATALYTIC ACTIVITY</scope>
    <scope>SUBSTRATE SPECIFICITY</scope>
    <scope>COFACTOR</scope>
    <scope>BIOPHYSICOCHEMICAL PROPERTIES</scope>
    <scope>PATHWAY</scope>
    <scope>SUBUNIT</scope>
    <scope>ACTIVE SITE</scope>
    <scope>MUTAGENESIS OF LEU-44; ARG-47; TYR-111; TYR-252; ASN-255; ARG-305; ASN-307 AND SER-309</scope>
    <scope>REACTION MECHANISM</scope>
    <source>
        <strain evidence="5">NCTC 8325 / PS 47</strain>
    </source>
</reference>
<proteinExistence type="evidence at protein level"/>
<name>LDMS_STAA8</name>
<keyword id="KW-0002">3D-structure</keyword>
<keyword id="KW-0067">ATP-binding</keyword>
<keyword id="KW-0436">Ligase</keyword>
<keyword id="KW-0460">Magnesium</keyword>
<keyword id="KW-0479">Metal-binding</keyword>
<keyword id="KW-0547">Nucleotide-binding</keyword>
<keyword id="KW-1185">Reference proteome</keyword>
<gene>
    <name evidence="7" type="ordered locus">SAOUHSC_02373</name>
</gene>
<comment type="function">
    <text evidence="3">L-amino acid ligase, which preferentially catalyzes the formation of L-aspartyl-L-methionine dipeptide from L-aspartate and L-methionine in the presence of ATP. Less active with L-asparagine and L-methionine as substrates. Less active with L-aspartate and either L-phenylalanine, L-valine, L-leucine or L-isoleucine as substrates. Decreased activity when L-methionine is substituted with seleno-DL-methionine, L-homocysteine, L-methionine sulfoxide, L-methionine sulfoximine and o-acetyl-L-serine. Decreased activity with acetylation of L-methionine amino group. Decreased activity by modification of L-methionine carboxylate to L-methionine methyl ester. No activity when L-methionine is substituted with L-homoserine. No activity with formylation of L-methionine amino group. No activity by modification of L-methionine carboxylate to L-methionine-glycine carboxylate. No activity when L-aspartate substrate is replaced by analogs such as L-homoserine, DL-aspartate beta-methyl ester, L-glutamate or o-acetyl-L-serine. No activity when L-aspartate amino and alpha-carboxylate groups are modified to L-malate, glycine-L-aspartate, L-aspartate-glycine or N-carbamoyl-DL-aspartate. No activity with L-methionine or L-aspartate as sole substrates. No activity in presence of other nucleoside triphosphates including GTP, CTP, UTP, TTP or ITP. Involved in sulfur amino acid metabolism.</text>
</comment>
<comment type="catalytic activity">
    <reaction evidence="3">
        <text>L-aspartate + L-methionine + ATP = L-aspartyl-L-methionine + ADP + phosphate + H(+)</text>
        <dbReference type="Rhea" id="RHEA:76447"/>
        <dbReference type="ChEBI" id="CHEBI:15378"/>
        <dbReference type="ChEBI" id="CHEBI:29991"/>
        <dbReference type="ChEBI" id="CHEBI:30616"/>
        <dbReference type="ChEBI" id="CHEBI:43474"/>
        <dbReference type="ChEBI" id="CHEBI:57844"/>
        <dbReference type="ChEBI" id="CHEBI:195235"/>
        <dbReference type="ChEBI" id="CHEBI:456216"/>
    </reaction>
</comment>
<comment type="cofactor">
    <cofactor evidence="3">
        <name>Mg(2+)</name>
        <dbReference type="ChEBI" id="CHEBI:18420"/>
    </cofactor>
</comment>
<comment type="biophysicochemical properties">
    <kinetics>
        <KM evidence="3">310 uM for ATP (at pH 8.0 and 37 degrees Celsius)</KM>
        <KM evidence="3">11000 uM for L-aspartate (at pH 8.0 and 37 degrees Celsius)</KM>
        <KM evidence="3">580 uM for L-methionine (at pH 8.0 and 37 degrees Celsius)</KM>
        <Vmax evidence="3">2.99 umol/sec/mg enzyme for the L-aspartate and L-methionine substrate pair (at pH 8.0 and 37 degrees Celsius)</Vmax>
        <text evidence="3">kcat is 48 sec(-1) for ATP.</text>
    </kinetics>
    <phDependence>
        <text evidence="3">Optimum pH is 7.5-8.5.</text>
    </phDependence>
</comment>
<comment type="pathway">
    <text evidence="3">Amino-acid metabolism.</text>
</comment>
<comment type="subunit">
    <text evidence="3">Primarily a monomer in solution. Minor homodimer formation.</text>
</comment>
<comment type="disruption phenotype">
    <text evidence="2">Grows in rich growth medium.</text>
</comment>